<organism>
    <name type="scientific">Drosophila pseudoobscura pseudoobscura</name>
    <name type="common">Fruit fly</name>
    <dbReference type="NCBI Taxonomy" id="46245"/>
    <lineage>
        <taxon>Eukaryota</taxon>
        <taxon>Metazoa</taxon>
        <taxon>Ecdysozoa</taxon>
        <taxon>Arthropoda</taxon>
        <taxon>Hexapoda</taxon>
        <taxon>Insecta</taxon>
        <taxon>Pterygota</taxon>
        <taxon>Neoptera</taxon>
        <taxon>Endopterygota</taxon>
        <taxon>Diptera</taxon>
        <taxon>Brachycera</taxon>
        <taxon>Muscomorpha</taxon>
        <taxon>Ephydroidea</taxon>
        <taxon>Drosophilidae</taxon>
        <taxon>Drosophila</taxon>
        <taxon>Sophophora</taxon>
    </lineage>
</organism>
<feature type="chain" id="PRO_0000333214" description="Tetratricopeptide repeat protein 30 homolog">
    <location>
        <begin position="1"/>
        <end position="654"/>
    </location>
</feature>
<feature type="repeat" description="TPR 1">
    <location>
        <begin position="10"/>
        <end position="43"/>
    </location>
</feature>
<feature type="repeat" description="TPR 2">
    <location>
        <begin position="44"/>
        <end position="76"/>
    </location>
</feature>
<feature type="repeat" description="TPR 3">
    <location>
        <begin position="143"/>
        <end position="176"/>
    </location>
</feature>
<feature type="repeat" description="TPR 4">
    <location>
        <begin position="178"/>
        <end position="210"/>
    </location>
</feature>
<feature type="repeat" description="TPR 5">
    <location>
        <begin position="384"/>
        <end position="417"/>
    </location>
</feature>
<feature type="repeat" description="TPR 6">
    <location>
        <begin position="449"/>
        <end position="483"/>
    </location>
</feature>
<feature type="repeat" description="TPR 7">
    <location>
        <begin position="533"/>
        <end position="566"/>
    </location>
</feature>
<name>TTC30_DROPS</name>
<dbReference type="EMBL" id="CH379061">
    <property type="protein sequence ID" value="EAL32966.1"/>
    <property type="molecule type" value="Genomic_DNA"/>
</dbReference>
<dbReference type="RefSeq" id="XP_001355907.1">
    <property type="nucleotide sequence ID" value="XM_001355871.2"/>
</dbReference>
<dbReference type="RefSeq" id="XP_015036544.1">
    <property type="nucleotide sequence ID" value="XM_015181058.1"/>
</dbReference>
<dbReference type="SMR" id="Q29L58"/>
<dbReference type="FunCoup" id="Q29L58">
    <property type="interactions" value="47"/>
</dbReference>
<dbReference type="STRING" id="46245.Q29L58"/>
<dbReference type="EnsemblMetazoa" id="FBtr0289261">
    <property type="protein sequence ID" value="FBpp0287699"/>
    <property type="gene ID" value="FBgn0078687"/>
</dbReference>
<dbReference type="EnsemblMetazoa" id="FBtr0377042">
    <property type="protein sequence ID" value="FBpp0338148"/>
    <property type="gene ID" value="FBgn0078687"/>
</dbReference>
<dbReference type="eggNOG" id="KOG4340">
    <property type="taxonomic scope" value="Eukaryota"/>
</dbReference>
<dbReference type="HOGENOM" id="CLU_023760_0_0_1"/>
<dbReference type="InParanoid" id="Q29L58"/>
<dbReference type="OMA" id="CCKHELY"/>
<dbReference type="PhylomeDB" id="Q29L58"/>
<dbReference type="Proteomes" id="UP000001819">
    <property type="component" value="Unplaced"/>
</dbReference>
<dbReference type="Bgee" id="FBgn0078687">
    <property type="expression patterns" value="Expressed in female reproductive system and 1 other cell type or tissue"/>
</dbReference>
<dbReference type="ExpressionAtlas" id="Q29L58">
    <property type="expression patterns" value="baseline"/>
</dbReference>
<dbReference type="GO" id="GO:0005879">
    <property type="term" value="C:axonemal microtubule"/>
    <property type="evidence" value="ECO:0000250"/>
    <property type="project" value="UniProtKB"/>
</dbReference>
<dbReference type="GO" id="GO:0005929">
    <property type="term" value="C:cilium"/>
    <property type="evidence" value="ECO:0000250"/>
    <property type="project" value="UniProtKB"/>
</dbReference>
<dbReference type="GO" id="GO:0030992">
    <property type="term" value="C:intraciliary transport particle B"/>
    <property type="evidence" value="ECO:0007669"/>
    <property type="project" value="TreeGrafter"/>
</dbReference>
<dbReference type="GO" id="GO:0120170">
    <property type="term" value="F:intraciliary transport particle B binding"/>
    <property type="evidence" value="ECO:0007669"/>
    <property type="project" value="TreeGrafter"/>
</dbReference>
<dbReference type="GO" id="GO:0042073">
    <property type="term" value="P:intraciliary transport"/>
    <property type="evidence" value="ECO:0000250"/>
    <property type="project" value="UniProtKB"/>
</dbReference>
<dbReference type="GO" id="GO:0018095">
    <property type="term" value="P:protein polyglutamylation"/>
    <property type="evidence" value="ECO:0000250"/>
    <property type="project" value="UniProtKB"/>
</dbReference>
<dbReference type="FunFam" id="1.25.40.10:FF:000693">
    <property type="entry name" value="Tetratricopeptide repeat domain 30A"/>
    <property type="match status" value="1"/>
</dbReference>
<dbReference type="FunFam" id="1.25.40.10:FF:000623">
    <property type="entry name" value="Tetratricopeptide repeat protein 30 homolog"/>
    <property type="match status" value="1"/>
</dbReference>
<dbReference type="FunFam" id="1.25.40.10:FF:000837">
    <property type="entry name" value="Tetratricopeptide repeat protein 30 homolog"/>
    <property type="match status" value="1"/>
</dbReference>
<dbReference type="Gene3D" id="1.25.40.10">
    <property type="entry name" value="Tetratricopeptide repeat domain"/>
    <property type="match status" value="3"/>
</dbReference>
<dbReference type="InterPro" id="IPR011990">
    <property type="entry name" value="TPR-like_helical_dom_sf"/>
</dbReference>
<dbReference type="InterPro" id="IPR013105">
    <property type="entry name" value="TPR_2"/>
</dbReference>
<dbReference type="InterPro" id="IPR019734">
    <property type="entry name" value="TPR_rpt"/>
</dbReference>
<dbReference type="InterPro" id="IPR039941">
    <property type="entry name" value="TT30"/>
</dbReference>
<dbReference type="PANTHER" id="PTHR20931">
    <property type="entry name" value="TETRATRICOPEPTIDE REPEAT PROTEIN 30"/>
    <property type="match status" value="1"/>
</dbReference>
<dbReference type="PANTHER" id="PTHR20931:SF0">
    <property type="entry name" value="TETRATRICOPEPTIDE REPEAT PROTEIN 30"/>
    <property type="match status" value="1"/>
</dbReference>
<dbReference type="Pfam" id="PF13432">
    <property type="entry name" value="TPR_16"/>
    <property type="match status" value="1"/>
</dbReference>
<dbReference type="Pfam" id="PF07719">
    <property type="entry name" value="TPR_2"/>
    <property type="match status" value="1"/>
</dbReference>
<dbReference type="SMART" id="SM00028">
    <property type="entry name" value="TPR"/>
    <property type="match status" value="4"/>
</dbReference>
<dbReference type="SUPFAM" id="SSF48452">
    <property type="entry name" value="TPR-like"/>
    <property type="match status" value="2"/>
</dbReference>
<dbReference type="PROSITE" id="PS50005">
    <property type="entry name" value="TPR"/>
    <property type="match status" value="2"/>
</dbReference>
<dbReference type="PROSITE" id="PS50293">
    <property type="entry name" value="TPR_REGION"/>
    <property type="match status" value="2"/>
</dbReference>
<evidence type="ECO:0000250" key="1"/>
<evidence type="ECO:0000305" key="2"/>
<sequence length="654" mass="72874">MLHQGIILREGHVTRTIYNLIKDKRYEDVIECITNIGEAANTRAGLSTLGHCYYHAQKYEEAATCYEQLCQLAPKEAKYRFYYAQSLYQAGIFAEALRVLKQISDQEEELREHCLQLQSAILYSSEDYAGAQSLLNQRAGGTADTLNDEGCLLYQADQHESAVQRFQAALQVGGFNPLVAYNVALAHFQRKQRAQALDYTSEIVERGVRNHPELGIGAQVDTDGSARSVGNPITMAMSGITQALNLKAALEYQDGNEEGAREALLDLPPRAESELDPVTLHNMALTDVQGPVAGLRKLAFLLQLGAPSCPKETFANILLICCRHELYETAADILAEHTDLTYKYLSQYLYELLDALITAQTSVELAEKKLGTLASSLAGKLRSLAAKVQEVRATNEQHALRDALKDYEQALELYLPVVMARAWISWRDDDFVGAEREFHSSAEFCSENAVWRLNAGHVLFMQGDKYNEAAAFYEPIVRQHSDDIMSVSAAVLANLCVSYIMTFQNEEAEELMRKVEKAEELKGNLGKQYHHLCIVNLVVGTLYCAKSNYEFGLTRIAHALEGGAGGRLYADTWLHVKRCILGLLTGMAKQNIILPYTAVQEVLGFLRSCEAYGLFTPANIFTATEQVPEEPLTIGLEARKLRLLLLKLSEYENC</sequence>
<gene>
    <name type="ORF">GA18687</name>
</gene>
<reference key="1">
    <citation type="journal article" date="2005" name="Genome Res.">
        <title>Comparative genome sequencing of Drosophila pseudoobscura: chromosomal, gene, and cis-element evolution.</title>
        <authorList>
            <person name="Richards S."/>
            <person name="Liu Y."/>
            <person name="Bettencourt B.R."/>
            <person name="Hradecky P."/>
            <person name="Letovsky S."/>
            <person name="Nielsen R."/>
            <person name="Thornton K."/>
            <person name="Hubisz M.J."/>
            <person name="Chen R."/>
            <person name="Meisel R.P."/>
            <person name="Couronne O."/>
            <person name="Hua S."/>
            <person name="Smith M.A."/>
            <person name="Zhang P."/>
            <person name="Liu J."/>
            <person name="Bussemaker H.J."/>
            <person name="van Batenburg M.F."/>
            <person name="Howells S.L."/>
            <person name="Scherer S.E."/>
            <person name="Sodergren E."/>
            <person name="Matthews B.B."/>
            <person name="Crosby M.A."/>
            <person name="Schroeder A.J."/>
            <person name="Ortiz-Barrientos D."/>
            <person name="Rives C.M."/>
            <person name="Metzker M.L."/>
            <person name="Muzny D.M."/>
            <person name="Scott G."/>
            <person name="Steffen D."/>
            <person name="Wheeler D.A."/>
            <person name="Worley K.C."/>
            <person name="Havlak P."/>
            <person name="Durbin K.J."/>
            <person name="Egan A."/>
            <person name="Gill R."/>
            <person name="Hume J."/>
            <person name="Morgan M.B."/>
            <person name="Miner G."/>
            <person name="Hamilton C."/>
            <person name="Huang Y."/>
            <person name="Waldron L."/>
            <person name="Verduzco D."/>
            <person name="Clerc-Blankenburg K.P."/>
            <person name="Dubchak I."/>
            <person name="Noor M.A.F."/>
            <person name="Anderson W."/>
            <person name="White K.P."/>
            <person name="Clark A.G."/>
            <person name="Schaeffer S.W."/>
            <person name="Gelbart W.M."/>
            <person name="Weinstock G.M."/>
            <person name="Gibbs R.A."/>
        </authorList>
    </citation>
    <scope>NUCLEOTIDE SEQUENCE [LARGE SCALE GENOMIC DNA]</scope>
    <source>
        <strain>MV2-25 / Tucson 14011-0121.94</strain>
    </source>
</reference>
<protein>
    <recommendedName>
        <fullName>Tetratricopeptide repeat protein 30 homolog</fullName>
        <shortName>TPR repeat protein 30 homolog</shortName>
    </recommendedName>
</protein>
<accession>Q29L58</accession>
<comment type="function">
    <text evidence="1">Required for polyglutamylation of axonemal tubulin in sensory cilia. Plays a role in anterograde intraflagellar transport (IFT), the process by which cilia precursors are transported from the base of the cilium to the site of their incorporation at the tip.</text>
</comment>
<comment type="subcellular location">
    <subcellularLocation>
        <location evidence="1">Cell projection</location>
        <location evidence="1">Cilium</location>
    </subcellularLocation>
</comment>
<comment type="similarity">
    <text evidence="2">Belongs to the TTC30/dfy-1/fleer family.</text>
</comment>
<keyword id="KW-0966">Cell projection</keyword>
<keyword id="KW-0969">Cilium</keyword>
<keyword id="KW-0970">Cilium biogenesis/degradation</keyword>
<keyword id="KW-1185">Reference proteome</keyword>
<keyword id="KW-0677">Repeat</keyword>
<keyword id="KW-0802">TPR repeat</keyword>
<proteinExistence type="inferred from homology"/>